<sequence>MTSSGKIRIYELSKDLSLDNKDVLDAARKLAIAAKSHSSSISSLEANQIKDFLKKSNTINTTIKSSKNLDKQILSVKKNPVKTQKDQKTEPKKKNHDQTELSQAKLNTLLKPSQTLIKSQGSSQANNQKALKNKFPAKQQITSPSKPNKPLPPNPRVEVKPIISKPLTQAERAIPQSEQKKDGQFINQPKRSELAKKSIGQPKQINPQEPKRPLAPPSRPKIDIQDKKPLQPNNQKAKTRINQGEISPQKVGQGNIQKIKSQNKQNAPSRTPQPPTKGNTLELVGAPIRKEKPVNKPHTNEVRNKPVMPSRPGAPKPPTAANRQGLSNRPGSNNRIGGTGRPGSPNRQGPNRGGVANRTTQGQNRPGANNRAGAPVRSGSPNRGGMQNRPGVPTRSLGGPNRSNNRPGVPSGMRKPVAPSELMQLQKPQARPNAPQRKTDSPTSLRPKRENSTGARPPVNRPTPAAPKKPAHRPGGTAAAPRRTGRPDWDDSAKLDALRNKSPQKQRQKVHIIGENDDALTAERGGFAGEQQAVVLSASLARPSKPKVGKRNNGKPLTALKKRKKETTRQRQRRRAMELRASREAKLVRPEMIVVPEDNLTVQELADMLSVESSEIIKSLFFKGITATVTQSLDLATIETVAEEFGVPVLQDDVEEAAKKTVEMIEEGDLKYLIRRPPVVTVMGHVDHGKTSLLDAIRKARVAAGEAGGITQHIGAYQIETEHDGSTKKLTFLDTPGHEAFTAMRARGTRVTDVAILVVAADDGVRPQTLEAISHARAAKVPIVVAINKIDKEGSSPDRVKQELSEQDLLSEEWGGDVVMVPVSAIKGENIDKLLEMVLLVTEVEDLQANPDRLAKGTVIEAHLDKAKGPVATLLVQNGTLKSGDVVAAGPVLGKVRAMVDENGSRIKEAGPSCPVEALGFSEVPTAGDEFEVYPDEKAARAVVGERATDARAARLAQQMASRRVSLSSMSGQASEGELKELNIILKADVQGSLEAILGSLEQLPKDEVQVRVLLSAPGEITETDIDLAAASGAVIVGFNTSMASGAKRAADANGVDVREYEVIYKLLEDIQLAMEGLLEPEMIEEALGVAEVRAIFSIGKSAVAGCYVTNGKIQRNCRARVKRGKQIVFEGDLDSLKRNKDDVKDVSTGFECGIGCDRFANWEEGDQIEAFKLVTQRRKLNN</sequence>
<protein>
    <recommendedName>
        <fullName evidence="2">Translation initiation factor IF-2</fullName>
    </recommendedName>
</protein>
<name>IF2_PROMT</name>
<keyword id="KW-0963">Cytoplasm</keyword>
<keyword id="KW-0342">GTP-binding</keyword>
<keyword id="KW-0396">Initiation factor</keyword>
<keyword id="KW-0547">Nucleotide-binding</keyword>
<keyword id="KW-0648">Protein biosynthesis</keyword>
<keyword id="KW-1185">Reference proteome</keyword>
<gene>
    <name evidence="2" type="primary">infB</name>
    <name type="ordered locus">PMN2A_1025</name>
</gene>
<dbReference type="EMBL" id="CP000095">
    <property type="protein sequence ID" value="AAZ58515.1"/>
    <property type="molecule type" value="Genomic_DNA"/>
</dbReference>
<dbReference type="RefSeq" id="WP_011295370.1">
    <property type="nucleotide sequence ID" value="NC_007335.2"/>
</dbReference>
<dbReference type="SMR" id="Q46J13"/>
<dbReference type="STRING" id="59920.PMN2A_1025"/>
<dbReference type="KEGG" id="pmn:PMN2A_1025"/>
<dbReference type="HOGENOM" id="CLU_006301_5_1_3"/>
<dbReference type="OrthoDB" id="9811804at2"/>
<dbReference type="PhylomeDB" id="Q46J13"/>
<dbReference type="Proteomes" id="UP000002535">
    <property type="component" value="Chromosome"/>
</dbReference>
<dbReference type="GO" id="GO:0005829">
    <property type="term" value="C:cytosol"/>
    <property type="evidence" value="ECO:0007669"/>
    <property type="project" value="TreeGrafter"/>
</dbReference>
<dbReference type="GO" id="GO:0005525">
    <property type="term" value="F:GTP binding"/>
    <property type="evidence" value="ECO:0007669"/>
    <property type="project" value="UniProtKB-KW"/>
</dbReference>
<dbReference type="GO" id="GO:0003924">
    <property type="term" value="F:GTPase activity"/>
    <property type="evidence" value="ECO:0007669"/>
    <property type="project" value="UniProtKB-UniRule"/>
</dbReference>
<dbReference type="GO" id="GO:0003743">
    <property type="term" value="F:translation initiation factor activity"/>
    <property type="evidence" value="ECO:0007669"/>
    <property type="project" value="UniProtKB-UniRule"/>
</dbReference>
<dbReference type="CDD" id="cd01887">
    <property type="entry name" value="IF2_eIF5B"/>
    <property type="match status" value="1"/>
</dbReference>
<dbReference type="CDD" id="cd03702">
    <property type="entry name" value="IF2_mtIF2_II"/>
    <property type="match status" value="1"/>
</dbReference>
<dbReference type="CDD" id="cd03692">
    <property type="entry name" value="mtIF2_IVc"/>
    <property type="match status" value="1"/>
</dbReference>
<dbReference type="FunFam" id="2.40.30.10:FF:000007">
    <property type="entry name" value="Translation initiation factor IF-2"/>
    <property type="match status" value="1"/>
</dbReference>
<dbReference type="FunFam" id="2.40.30.10:FF:000008">
    <property type="entry name" value="Translation initiation factor IF-2"/>
    <property type="match status" value="1"/>
</dbReference>
<dbReference type="FunFam" id="3.40.50.10050:FF:000001">
    <property type="entry name" value="Translation initiation factor IF-2"/>
    <property type="match status" value="1"/>
</dbReference>
<dbReference type="FunFam" id="3.40.50.300:FF:000019">
    <property type="entry name" value="Translation initiation factor IF-2"/>
    <property type="match status" value="1"/>
</dbReference>
<dbReference type="Gene3D" id="1.10.10.2480">
    <property type="match status" value="1"/>
</dbReference>
<dbReference type="Gene3D" id="3.40.50.300">
    <property type="entry name" value="P-loop containing nucleotide triphosphate hydrolases"/>
    <property type="match status" value="1"/>
</dbReference>
<dbReference type="Gene3D" id="2.40.30.10">
    <property type="entry name" value="Translation factors"/>
    <property type="match status" value="2"/>
</dbReference>
<dbReference type="Gene3D" id="3.40.50.10050">
    <property type="entry name" value="Translation initiation factor IF- 2, domain 3"/>
    <property type="match status" value="1"/>
</dbReference>
<dbReference type="HAMAP" id="MF_00100_B">
    <property type="entry name" value="IF_2_B"/>
    <property type="match status" value="1"/>
</dbReference>
<dbReference type="InterPro" id="IPR053905">
    <property type="entry name" value="EF-G-like_DII"/>
</dbReference>
<dbReference type="InterPro" id="IPR044145">
    <property type="entry name" value="IF2_II"/>
</dbReference>
<dbReference type="InterPro" id="IPR006847">
    <property type="entry name" value="IF2_N"/>
</dbReference>
<dbReference type="InterPro" id="IPR027417">
    <property type="entry name" value="P-loop_NTPase"/>
</dbReference>
<dbReference type="InterPro" id="IPR005225">
    <property type="entry name" value="Small_GTP-bd"/>
</dbReference>
<dbReference type="InterPro" id="IPR000795">
    <property type="entry name" value="T_Tr_GTP-bd_dom"/>
</dbReference>
<dbReference type="InterPro" id="IPR000178">
    <property type="entry name" value="TF_IF2_bacterial-like"/>
</dbReference>
<dbReference type="InterPro" id="IPR015760">
    <property type="entry name" value="TIF_IF2"/>
</dbReference>
<dbReference type="InterPro" id="IPR023115">
    <property type="entry name" value="TIF_IF2_dom3"/>
</dbReference>
<dbReference type="InterPro" id="IPR036925">
    <property type="entry name" value="TIF_IF2_dom3_sf"/>
</dbReference>
<dbReference type="InterPro" id="IPR009000">
    <property type="entry name" value="Transl_B-barrel_sf"/>
</dbReference>
<dbReference type="NCBIfam" id="TIGR00487">
    <property type="entry name" value="IF-2"/>
    <property type="match status" value="1"/>
</dbReference>
<dbReference type="NCBIfam" id="TIGR00231">
    <property type="entry name" value="small_GTP"/>
    <property type="match status" value="1"/>
</dbReference>
<dbReference type="PANTHER" id="PTHR43381:SF5">
    <property type="entry name" value="TR-TYPE G DOMAIN-CONTAINING PROTEIN"/>
    <property type="match status" value="1"/>
</dbReference>
<dbReference type="PANTHER" id="PTHR43381">
    <property type="entry name" value="TRANSLATION INITIATION FACTOR IF-2-RELATED"/>
    <property type="match status" value="1"/>
</dbReference>
<dbReference type="Pfam" id="PF22042">
    <property type="entry name" value="EF-G_D2"/>
    <property type="match status" value="1"/>
</dbReference>
<dbReference type="Pfam" id="PF00009">
    <property type="entry name" value="GTP_EFTU"/>
    <property type="match status" value="1"/>
</dbReference>
<dbReference type="Pfam" id="PF11987">
    <property type="entry name" value="IF-2"/>
    <property type="match status" value="1"/>
</dbReference>
<dbReference type="Pfam" id="PF04760">
    <property type="entry name" value="IF2_N"/>
    <property type="match status" value="2"/>
</dbReference>
<dbReference type="PRINTS" id="PR00315">
    <property type="entry name" value="ELONGATNFCT"/>
</dbReference>
<dbReference type="SUPFAM" id="SSF52156">
    <property type="entry name" value="Initiation factor IF2/eIF5b, domain 3"/>
    <property type="match status" value="1"/>
</dbReference>
<dbReference type="SUPFAM" id="SSF52540">
    <property type="entry name" value="P-loop containing nucleoside triphosphate hydrolases"/>
    <property type="match status" value="1"/>
</dbReference>
<dbReference type="SUPFAM" id="SSF50447">
    <property type="entry name" value="Translation proteins"/>
    <property type="match status" value="2"/>
</dbReference>
<dbReference type="PROSITE" id="PS51722">
    <property type="entry name" value="G_TR_2"/>
    <property type="match status" value="1"/>
</dbReference>
<dbReference type="PROSITE" id="PS01176">
    <property type="entry name" value="IF2"/>
    <property type="match status" value="1"/>
</dbReference>
<feature type="chain" id="PRO_0000228226" description="Translation initiation factor IF-2">
    <location>
        <begin position="1"/>
        <end position="1183"/>
    </location>
</feature>
<feature type="domain" description="tr-type G">
    <location>
        <begin position="675"/>
        <end position="847"/>
    </location>
</feature>
<feature type="region of interest" description="Disordered" evidence="3">
    <location>
        <begin position="65"/>
        <end position="512"/>
    </location>
</feature>
<feature type="region of interest" description="Disordered" evidence="3">
    <location>
        <begin position="540"/>
        <end position="579"/>
    </location>
</feature>
<feature type="region of interest" description="G1" evidence="1">
    <location>
        <begin position="684"/>
        <end position="691"/>
    </location>
</feature>
<feature type="region of interest" description="G2" evidence="1">
    <location>
        <begin position="709"/>
        <end position="713"/>
    </location>
</feature>
<feature type="region of interest" description="G3" evidence="1">
    <location>
        <begin position="734"/>
        <end position="737"/>
    </location>
</feature>
<feature type="region of interest" description="G4" evidence="1">
    <location>
        <begin position="788"/>
        <end position="791"/>
    </location>
</feature>
<feature type="region of interest" description="G5" evidence="1">
    <location>
        <begin position="824"/>
        <end position="826"/>
    </location>
</feature>
<feature type="compositionally biased region" description="Basic and acidic residues" evidence="3">
    <location>
        <begin position="83"/>
        <end position="99"/>
    </location>
</feature>
<feature type="compositionally biased region" description="Polar residues" evidence="3">
    <location>
        <begin position="100"/>
        <end position="130"/>
    </location>
</feature>
<feature type="compositionally biased region" description="Basic and acidic residues" evidence="3">
    <location>
        <begin position="220"/>
        <end position="229"/>
    </location>
</feature>
<feature type="compositionally biased region" description="Polar residues" evidence="3">
    <location>
        <begin position="231"/>
        <end position="270"/>
    </location>
</feature>
<feature type="compositionally biased region" description="Basic and acidic residues" evidence="3">
    <location>
        <begin position="288"/>
        <end position="304"/>
    </location>
</feature>
<feature type="compositionally biased region" description="Polar residues" evidence="3">
    <location>
        <begin position="321"/>
        <end position="336"/>
    </location>
</feature>
<feature type="compositionally biased region" description="Polar residues" evidence="3">
    <location>
        <begin position="357"/>
        <end position="367"/>
    </location>
</feature>
<feature type="compositionally biased region" description="Basic and acidic residues" evidence="3">
    <location>
        <begin position="485"/>
        <end position="499"/>
    </location>
</feature>
<feature type="compositionally biased region" description="Basic residues" evidence="3">
    <location>
        <begin position="544"/>
        <end position="553"/>
    </location>
</feature>
<feature type="compositionally biased region" description="Basic residues" evidence="3">
    <location>
        <begin position="560"/>
        <end position="574"/>
    </location>
</feature>
<feature type="binding site" evidence="2">
    <location>
        <begin position="684"/>
        <end position="691"/>
    </location>
    <ligand>
        <name>GTP</name>
        <dbReference type="ChEBI" id="CHEBI:37565"/>
    </ligand>
</feature>
<feature type="binding site" evidence="2">
    <location>
        <begin position="734"/>
        <end position="738"/>
    </location>
    <ligand>
        <name>GTP</name>
        <dbReference type="ChEBI" id="CHEBI:37565"/>
    </ligand>
</feature>
<feature type="binding site" evidence="2">
    <location>
        <begin position="788"/>
        <end position="791"/>
    </location>
    <ligand>
        <name>GTP</name>
        <dbReference type="ChEBI" id="CHEBI:37565"/>
    </ligand>
</feature>
<evidence type="ECO:0000250" key="1"/>
<evidence type="ECO:0000255" key="2">
    <source>
        <dbReference type="HAMAP-Rule" id="MF_00100"/>
    </source>
</evidence>
<evidence type="ECO:0000256" key="3">
    <source>
        <dbReference type="SAM" id="MobiDB-lite"/>
    </source>
</evidence>
<comment type="function">
    <text evidence="2">One of the essential components for the initiation of protein synthesis. Protects formylmethionyl-tRNA from spontaneous hydrolysis and promotes its binding to the 30S ribosomal subunits. Also involved in the hydrolysis of GTP during the formation of the 70S ribosomal complex.</text>
</comment>
<comment type="subcellular location">
    <subcellularLocation>
        <location evidence="2">Cytoplasm</location>
    </subcellularLocation>
</comment>
<comment type="similarity">
    <text evidence="2">Belongs to the TRAFAC class translation factor GTPase superfamily. Classic translation factor GTPase family. IF-2 subfamily.</text>
</comment>
<reference key="1">
    <citation type="journal article" date="2007" name="PLoS Genet.">
        <title>Patterns and implications of gene gain and loss in the evolution of Prochlorococcus.</title>
        <authorList>
            <person name="Kettler G.C."/>
            <person name="Martiny A.C."/>
            <person name="Huang K."/>
            <person name="Zucker J."/>
            <person name="Coleman M.L."/>
            <person name="Rodrigue S."/>
            <person name="Chen F."/>
            <person name="Lapidus A."/>
            <person name="Ferriera S."/>
            <person name="Johnson J."/>
            <person name="Steglich C."/>
            <person name="Church G.M."/>
            <person name="Richardson P."/>
            <person name="Chisholm S.W."/>
        </authorList>
    </citation>
    <scope>NUCLEOTIDE SEQUENCE [LARGE SCALE GENOMIC DNA]</scope>
    <source>
        <strain>NATL2A</strain>
    </source>
</reference>
<organism>
    <name type="scientific">Prochlorococcus marinus (strain NATL2A)</name>
    <dbReference type="NCBI Taxonomy" id="59920"/>
    <lineage>
        <taxon>Bacteria</taxon>
        <taxon>Bacillati</taxon>
        <taxon>Cyanobacteriota</taxon>
        <taxon>Cyanophyceae</taxon>
        <taxon>Synechococcales</taxon>
        <taxon>Prochlorococcaceae</taxon>
        <taxon>Prochlorococcus</taxon>
    </lineage>
</organism>
<proteinExistence type="inferred from homology"/>
<accession>Q46J13</accession>